<reference key="1">
    <citation type="journal article" date="1996" name="Nucleic Acids Res.">
        <title>Complete sequence analysis of the genome of the bacterium Mycoplasma pneumoniae.</title>
        <authorList>
            <person name="Himmelreich R."/>
            <person name="Hilbert H."/>
            <person name="Plagens H."/>
            <person name="Pirkl E."/>
            <person name="Li B.-C."/>
            <person name="Herrmann R."/>
        </authorList>
    </citation>
    <scope>NUCLEOTIDE SEQUENCE [LARGE SCALE GENOMIC DNA]</scope>
    <source>
        <strain>ATCC 29342 / M129 / Subtype 1</strain>
    </source>
</reference>
<comment type="similarity">
    <text evidence="1">To M.pneumoniae MPN_635 N-terminal region.</text>
</comment>
<feature type="chain" id="PRO_0000210700" description="Uncharacterized protein MPN_633">
    <location>
        <begin position="1"/>
        <end position="247"/>
    </location>
</feature>
<protein>
    <recommendedName>
        <fullName>Uncharacterized protein MPN_633</fullName>
    </recommendedName>
</protein>
<name>Y633_MYCPN</name>
<evidence type="ECO:0000305" key="1"/>
<sequence>MRYLDLNIKSILADWEIADAIRELIANAIDEHRLSNTAFPVIELQKGFLNSSLVIKDYGRGIKSNHFIQNESREKVQSEKTIGKFGIGLKDAIAVLFRHNVKVSFTSSEGTFTPVERMKEGMKDGTKTIQITVDETKKIDKGTDILISKISRSDYEKAIAIFLELRTGYQKLASSKKGDIYRSENGSEIFLNGMKIGTDENFLFSYDIKEPNKKLQKSLNRERKTLSRDSYRDNIISILKSSINKNT</sequence>
<gene>
    <name type="ordered locus">MPN_633</name>
    <name type="ORF">C12_orf247</name>
    <name type="ORF">MP209</name>
</gene>
<organism>
    <name type="scientific">Mycoplasma pneumoniae (strain ATCC 29342 / M129 / Subtype 1)</name>
    <name type="common">Mycoplasmoides pneumoniae</name>
    <dbReference type="NCBI Taxonomy" id="272634"/>
    <lineage>
        <taxon>Bacteria</taxon>
        <taxon>Bacillati</taxon>
        <taxon>Mycoplasmatota</taxon>
        <taxon>Mycoplasmoidales</taxon>
        <taxon>Mycoplasmoidaceae</taxon>
        <taxon>Mycoplasmoides</taxon>
    </lineage>
</organism>
<accession>P75164</accession>
<dbReference type="EMBL" id="U00089">
    <property type="protein sequence ID" value="AAB95857.1"/>
    <property type="molecule type" value="Genomic_DNA"/>
</dbReference>
<dbReference type="PIR" id="S73535">
    <property type="entry name" value="S73535"/>
</dbReference>
<dbReference type="RefSeq" id="WP_010874990.1">
    <property type="nucleotide sequence ID" value="NC_000912.1"/>
</dbReference>
<dbReference type="IntAct" id="P75164">
    <property type="interactions" value="1"/>
</dbReference>
<dbReference type="STRING" id="272634.MPN_633"/>
<dbReference type="EnsemblBacteria" id="AAB95857">
    <property type="protein sequence ID" value="AAB95857"/>
    <property type="gene ID" value="MPN_633"/>
</dbReference>
<dbReference type="KEGG" id="mpn:MPN_633"/>
<dbReference type="HOGENOM" id="CLU_1123570_0_0_14"/>
<dbReference type="Proteomes" id="UP000000808">
    <property type="component" value="Chromosome"/>
</dbReference>
<dbReference type="Gene3D" id="3.30.565.10">
    <property type="entry name" value="Histidine kinase-like ATPase, C-terminal domain"/>
    <property type="match status" value="1"/>
</dbReference>
<dbReference type="InterPro" id="IPR036890">
    <property type="entry name" value="HATPase_C_sf"/>
</dbReference>
<dbReference type="Pfam" id="PF13589">
    <property type="entry name" value="HATPase_c_3"/>
    <property type="match status" value="1"/>
</dbReference>
<dbReference type="SUPFAM" id="SSF55874">
    <property type="entry name" value="ATPase domain of HSP90 chaperone/DNA topoisomerase II/histidine kinase"/>
    <property type="match status" value="1"/>
</dbReference>
<keyword id="KW-1185">Reference proteome</keyword>
<proteinExistence type="predicted"/>